<name>METK2_HORVU</name>
<reference key="1">
    <citation type="journal article" date="2005" name="Plant Mol. Biol.">
        <title>The methylation cycle and its possible functions in barley endosperm development.</title>
        <authorList>
            <person name="Radchuk V.V."/>
            <person name="Sreenivasulu N."/>
            <person name="Radchuk R.I."/>
            <person name="Wobus U."/>
            <person name="Weschke W."/>
        </authorList>
    </citation>
    <scope>NUCLEOTIDE SEQUENCE [MRNA]</scope>
    <source>
        <strain>cv. Barke</strain>
        <tissue>Seed</tissue>
    </source>
</reference>
<evidence type="ECO:0000250" key="1"/>
<evidence type="ECO:0000250" key="2">
    <source>
        <dbReference type="UniProtKB" id="P0A817"/>
    </source>
</evidence>
<evidence type="ECO:0000250" key="3">
    <source>
        <dbReference type="UniProtKB" id="P13444"/>
    </source>
</evidence>
<evidence type="ECO:0000250" key="4">
    <source>
        <dbReference type="UniProtKB" id="Q00266"/>
    </source>
</evidence>
<evidence type="ECO:0000250" key="5">
    <source>
        <dbReference type="UniProtKB" id="Q96551"/>
    </source>
</evidence>
<evidence type="ECO:0000305" key="6"/>
<gene>
    <name type="primary">SAM2</name>
</gene>
<organism>
    <name type="scientific">Hordeum vulgare</name>
    <name type="common">Barley</name>
    <dbReference type="NCBI Taxonomy" id="4513"/>
    <lineage>
        <taxon>Eukaryota</taxon>
        <taxon>Viridiplantae</taxon>
        <taxon>Streptophyta</taxon>
        <taxon>Embryophyta</taxon>
        <taxon>Tracheophyta</taxon>
        <taxon>Spermatophyta</taxon>
        <taxon>Magnoliopsida</taxon>
        <taxon>Liliopsida</taxon>
        <taxon>Poales</taxon>
        <taxon>Poaceae</taxon>
        <taxon>BOP clade</taxon>
        <taxon>Pooideae</taxon>
        <taxon>Triticodae</taxon>
        <taxon>Triticeae</taxon>
        <taxon>Hordeinae</taxon>
        <taxon>Hordeum</taxon>
    </lineage>
</organism>
<protein>
    <recommendedName>
        <fullName>S-adenosylmethionine synthase 2</fullName>
        <shortName>AdoMet synthase 2</shortName>
        <ecNumber evidence="5">2.5.1.6</ecNumber>
    </recommendedName>
    <alternativeName>
        <fullName>Methionine adenosyltransferase 2</fullName>
        <shortName>MAT 2</shortName>
    </alternativeName>
</protein>
<sequence>MAAETFLFTSESVNEGHPDKLCDQVSDAVLDACLAQDPDSKVACETCTKTNMVMVFGEITTKATVDYEKIVRDTCRDIGFISDDVGLDADHCKVLVNIEQQSPDIAQGVHGHFTKRPEEVGAGDQGIMFGYATDETPELMPLTHMLATKLGARLTEVRKNGTCAWLRPDGKTQVTIEYLNEGGAMVPVRVHTVLISTQHDETVTNDEIAADLKEHVIKPVIPGKYLDENTIFHLNPSGRFVIGGPHGDAGLTGRKIIIDTYGGWGAHGGGAFSGKDPTKVDRSGAYIARQAAKSIIASGLARRCIVQISYAIGVPEPLSVFVDSYGTGKIPDREILKLVKENFDFRPGMISINLDLKKGGKRFIKTAAYGHFGRDDADFTWEVVKPLKFDKASA</sequence>
<comment type="function">
    <text evidence="5">Catalyzes the formation of S-adenosylmethionine from methionine and ATP. The reaction comprises two steps that are both catalyzed by the same enzyme: formation of S-adenosylmethionine (AdoMet) and triphosphate, and subsequent hydrolysis of the triphosphate.</text>
</comment>
<comment type="catalytic activity">
    <reaction evidence="5">
        <text>L-methionine + ATP + H2O = S-adenosyl-L-methionine + phosphate + diphosphate</text>
        <dbReference type="Rhea" id="RHEA:21080"/>
        <dbReference type="ChEBI" id="CHEBI:15377"/>
        <dbReference type="ChEBI" id="CHEBI:30616"/>
        <dbReference type="ChEBI" id="CHEBI:33019"/>
        <dbReference type="ChEBI" id="CHEBI:43474"/>
        <dbReference type="ChEBI" id="CHEBI:57844"/>
        <dbReference type="ChEBI" id="CHEBI:59789"/>
        <dbReference type="EC" id="2.5.1.6"/>
    </reaction>
</comment>
<comment type="cofactor">
    <cofactor evidence="5">
        <name>Mn(2+)</name>
        <dbReference type="ChEBI" id="CHEBI:29035"/>
    </cofactor>
    <cofactor evidence="5">
        <name>Mg(2+)</name>
        <dbReference type="ChEBI" id="CHEBI:18420"/>
    </cofactor>
    <cofactor evidence="5">
        <name>Co(2+)</name>
        <dbReference type="ChEBI" id="CHEBI:48828"/>
    </cofactor>
    <text evidence="3 5">Binds 2 divalent ions per subunit. The metal ions interact primarily with the substrate (By similarity). Can utilize magnesium, manganese or cobalt (in vitro) (By similarity).</text>
</comment>
<comment type="cofactor">
    <cofactor evidence="5">
        <name>K(+)</name>
        <dbReference type="ChEBI" id="CHEBI:29103"/>
    </cofactor>
    <text evidence="3">Binds 1 potassium ion per subunit. The potassium ion interacts primarily with the substrate (By similarity).</text>
</comment>
<comment type="pathway">
    <text evidence="5">Amino-acid biosynthesis; S-adenosyl-L-methionine biosynthesis; S-adenosyl-L-methionine from L-methionine: step 1/1.</text>
</comment>
<comment type="subunit">
    <text evidence="1">Homotetramer.</text>
</comment>
<comment type="subcellular location">
    <subcellularLocation>
        <location evidence="1">Cytoplasm</location>
    </subcellularLocation>
</comment>
<comment type="similarity">
    <text evidence="6">Belongs to the AdoMet synthase family.</text>
</comment>
<keyword id="KW-0067">ATP-binding</keyword>
<keyword id="KW-0170">Cobalt</keyword>
<keyword id="KW-0963">Cytoplasm</keyword>
<keyword id="KW-0460">Magnesium</keyword>
<keyword id="KW-0479">Metal-binding</keyword>
<keyword id="KW-0547">Nucleotide-binding</keyword>
<keyword id="KW-0554">One-carbon metabolism</keyword>
<keyword id="KW-0630">Potassium</keyword>
<keyword id="KW-0808">Transferase</keyword>
<proteinExistence type="evidence at transcript level"/>
<dbReference type="EC" id="2.5.1.6" evidence="5"/>
<dbReference type="EMBL" id="AM039894">
    <property type="protein sequence ID" value="CAJ01703.1"/>
    <property type="molecule type" value="mRNA"/>
</dbReference>
<dbReference type="SMR" id="Q4LB23"/>
<dbReference type="UniPathway" id="UPA00315">
    <property type="reaction ID" value="UER00080"/>
</dbReference>
<dbReference type="ExpressionAtlas" id="Q4LB23">
    <property type="expression patterns" value="baseline"/>
</dbReference>
<dbReference type="GO" id="GO:0005737">
    <property type="term" value="C:cytoplasm"/>
    <property type="evidence" value="ECO:0007669"/>
    <property type="project" value="UniProtKB-SubCell"/>
</dbReference>
<dbReference type="GO" id="GO:0005524">
    <property type="term" value="F:ATP binding"/>
    <property type="evidence" value="ECO:0007669"/>
    <property type="project" value="UniProtKB-KW"/>
</dbReference>
<dbReference type="GO" id="GO:0046872">
    <property type="term" value="F:metal ion binding"/>
    <property type="evidence" value="ECO:0007669"/>
    <property type="project" value="UniProtKB-KW"/>
</dbReference>
<dbReference type="GO" id="GO:0004478">
    <property type="term" value="F:methionine adenosyltransferase activity"/>
    <property type="evidence" value="ECO:0007669"/>
    <property type="project" value="UniProtKB-EC"/>
</dbReference>
<dbReference type="GO" id="GO:0006730">
    <property type="term" value="P:one-carbon metabolic process"/>
    <property type="evidence" value="ECO:0007669"/>
    <property type="project" value="UniProtKB-KW"/>
</dbReference>
<dbReference type="GO" id="GO:0006556">
    <property type="term" value="P:S-adenosylmethionine biosynthetic process"/>
    <property type="evidence" value="ECO:0007669"/>
    <property type="project" value="UniProtKB-UniPathway"/>
</dbReference>
<dbReference type="CDD" id="cd18079">
    <property type="entry name" value="S-AdoMet_synt"/>
    <property type="match status" value="1"/>
</dbReference>
<dbReference type="FunFam" id="3.30.300.10:FF:000003">
    <property type="entry name" value="S-adenosylmethionine synthase"/>
    <property type="match status" value="1"/>
</dbReference>
<dbReference type="FunFam" id="3.30.300.10:FF:000004">
    <property type="entry name" value="S-adenosylmethionine synthase"/>
    <property type="match status" value="1"/>
</dbReference>
<dbReference type="FunFam" id="3.30.300.10:FF:000011">
    <property type="entry name" value="S-adenosylmethionine synthase"/>
    <property type="match status" value="1"/>
</dbReference>
<dbReference type="FunFam" id="3.30.300.10:FF:000021">
    <property type="entry name" value="S-adenosylmethionine synthetase 1"/>
    <property type="match status" value="1"/>
</dbReference>
<dbReference type="Gene3D" id="3.30.300.10">
    <property type="match status" value="3"/>
</dbReference>
<dbReference type="HAMAP" id="MF_00086">
    <property type="entry name" value="S_AdoMet_synth1"/>
    <property type="match status" value="1"/>
</dbReference>
<dbReference type="InterPro" id="IPR022631">
    <property type="entry name" value="ADOMET_SYNTHASE_CS"/>
</dbReference>
<dbReference type="InterPro" id="IPR022630">
    <property type="entry name" value="S-AdoMet_synt_C"/>
</dbReference>
<dbReference type="InterPro" id="IPR022629">
    <property type="entry name" value="S-AdoMet_synt_central"/>
</dbReference>
<dbReference type="InterPro" id="IPR022628">
    <property type="entry name" value="S-AdoMet_synt_N"/>
</dbReference>
<dbReference type="InterPro" id="IPR002133">
    <property type="entry name" value="S-AdoMet_synthetase"/>
</dbReference>
<dbReference type="InterPro" id="IPR022636">
    <property type="entry name" value="S-AdoMet_synthetase_sfam"/>
</dbReference>
<dbReference type="NCBIfam" id="TIGR01034">
    <property type="entry name" value="metK"/>
    <property type="match status" value="1"/>
</dbReference>
<dbReference type="PANTHER" id="PTHR11964">
    <property type="entry name" value="S-ADENOSYLMETHIONINE SYNTHETASE"/>
    <property type="match status" value="1"/>
</dbReference>
<dbReference type="Pfam" id="PF02773">
    <property type="entry name" value="S-AdoMet_synt_C"/>
    <property type="match status" value="1"/>
</dbReference>
<dbReference type="Pfam" id="PF02772">
    <property type="entry name" value="S-AdoMet_synt_M"/>
    <property type="match status" value="1"/>
</dbReference>
<dbReference type="Pfam" id="PF00438">
    <property type="entry name" value="S-AdoMet_synt_N"/>
    <property type="match status" value="1"/>
</dbReference>
<dbReference type="PIRSF" id="PIRSF000497">
    <property type="entry name" value="MAT"/>
    <property type="match status" value="1"/>
</dbReference>
<dbReference type="SUPFAM" id="SSF55973">
    <property type="entry name" value="S-adenosylmethionine synthetase"/>
    <property type="match status" value="3"/>
</dbReference>
<dbReference type="PROSITE" id="PS00376">
    <property type="entry name" value="ADOMET_SYNTHASE_1"/>
    <property type="match status" value="1"/>
</dbReference>
<dbReference type="PROSITE" id="PS00377">
    <property type="entry name" value="ADOMET_SYNTHASE_2"/>
    <property type="match status" value="1"/>
</dbReference>
<accession>Q4LB23</accession>
<feature type="chain" id="PRO_0000363025" description="S-adenosylmethionine synthase 2">
    <location>
        <begin position="1"/>
        <end position="394"/>
    </location>
</feature>
<feature type="binding site" evidence="3">
    <location>
        <position position="11"/>
    </location>
    <ligand>
        <name>Mg(2+)</name>
        <dbReference type="ChEBI" id="CHEBI:18420"/>
    </ligand>
</feature>
<feature type="binding site" description="in other chain" evidence="4">
    <location>
        <position position="17"/>
    </location>
    <ligand>
        <name>ATP</name>
        <dbReference type="ChEBI" id="CHEBI:30616"/>
        <note>ligand shared between two neighboring subunits</note>
    </ligand>
</feature>
<feature type="binding site" evidence="2">
    <location>
        <position position="45"/>
    </location>
    <ligand>
        <name>K(+)</name>
        <dbReference type="ChEBI" id="CHEBI:29103"/>
    </ligand>
</feature>
<feature type="binding site" description="in other chain" evidence="2">
    <location>
        <position position="58"/>
    </location>
    <ligand>
        <name>L-methionine</name>
        <dbReference type="ChEBI" id="CHEBI:57844"/>
        <note>ligand shared between two neighboring subunits</note>
    </ligand>
</feature>
<feature type="binding site" description="in other chain" evidence="2">
    <location>
        <position position="101"/>
    </location>
    <ligand>
        <name>L-methionine</name>
        <dbReference type="ChEBI" id="CHEBI:57844"/>
        <note>ligand shared between two neighboring subunits</note>
    </ligand>
</feature>
<feature type="binding site" description="in other chain" evidence="4">
    <location>
        <begin position="169"/>
        <end position="171"/>
    </location>
    <ligand>
        <name>ATP</name>
        <dbReference type="ChEBI" id="CHEBI:30616"/>
        <note>ligand shared between two neighboring subunits</note>
    </ligand>
</feature>
<feature type="binding site" description="in other chain" evidence="4">
    <location>
        <begin position="237"/>
        <end position="240"/>
    </location>
    <ligand>
        <name>ATP</name>
        <dbReference type="ChEBI" id="CHEBI:30616"/>
        <note>ligand shared between two neighboring subunits</note>
    </ligand>
</feature>
<feature type="binding site" description="in other chain" evidence="4">
    <location>
        <position position="248"/>
    </location>
    <ligand>
        <name>ATP</name>
        <dbReference type="ChEBI" id="CHEBI:30616"/>
        <note>ligand shared between two neighboring subunits</note>
    </ligand>
</feature>
<feature type="binding site" evidence="2">
    <location>
        <position position="248"/>
    </location>
    <ligand>
        <name>L-methionine</name>
        <dbReference type="ChEBI" id="CHEBI:57844"/>
        <note>ligand shared between two neighboring subunits</note>
    </ligand>
</feature>
<feature type="binding site" description="in other chain" evidence="2">
    <location>
        <begin position="254"/>
        <end position="255"/>
    </location>
    <ligand>
        <name>ATP</name>
        <dbReference type="ChEBI" id="CHEBI:30616"/>
        <note>ligand shared between two neighboring subunits</note>
    </ligand>
</feature>
<feature type="binding site" evidence="2">
    <location>
        <position position="271"/>
    </location>
    <ligand>
        <name>ATP</name>
        <dbReference type="ChEBI" id="CHEBI:30616"/>
        <note>ligand shared between two neighboring subunits</note>
    </ligand>
</feature>
<feature type="binding site" evidence="2">
    <location>
        <position position="275"/>
    </location>
    <ligand>
        <name>ATP</name>
        <dbReference type="ChEBI" id="CHEBI:30616"/>
        <note>ligand shared between two neighboring subunits</note>
    </ligand>
</feature>
<feature type="binding site" evidence="3">
    <location>
        <position position="279"/>
    </location>
    <ligand>
        <name>ATP</name>
        <dbReference type="ChEBI" id="CHEBI:30616"/>
        <note>ligand shared between two neighboring subunits</note>
    </ligand>
</feature>
<feature type="binding site" description="in other chain" evidence="2">
    <location>
        <position position="279"/>
    </location>
    <ligand>
        <name>L-methionine</name>
        <dbReference type="ChEBI" id="CHEBI:57844"/>
        <note>ligand shared between two neighboring subunits</note>
    </ligand>
</feature>